<dbReference type="EMBL" id="AE005674">
    <property type="protein sequence ID" value="AAN42548.2"/>
    <property type="molecule type" value="Genomic_DNA"/>
</dbReference>
<dbReference type="EMBL" id="AE014073">
    <property type="protein sequence ID" value="AAP16434.1"/>
    <property type="molecule type" value="Genomic_DNA"/>
</dbReference>
<dbReference type="RefSeq" id="NP_706841.2">
    <property type="nucleotide sequence ID" value="NC_004337.2"/>
</dbReference>
<dbReference type="PDB" id="7V8P">
    <property type="method" value="X-ray"/>
    <property type="resolution" value="2.44 A"/>
    <property type="chains" value="A=1-225"/>
</dbReference>
<dbReference type="PDBsum" id="7V8P"/>
<dbReference type="SMR" id="Q7UD30"/>
<dbReference type="STRING" id="198214.SF0919"/>
<dbReference type="PaxDb" id="198214-SF0919"/>
<dbReference type="GeneID" id="1023907"/>
<dbReference type="KEGG" id="sfl:SF0919"/>
<dbReference type="KEGG" id="sfx:S0983"/>
<dbReference type="PATRIC" id="fig|198214.7.peg.1070"/>
<dbReference type="HOGENOM" id="CLU_1146408_0_0_6"/>
<dbReference type="Proteomes" id="UP000001006">
    <property type="component" value="Chromosome"/>
</dbReference>
<dbReference type="Proteomes" id="UP000002673">
    <property type="component" value="Chromosome"/>
</dbReference>
<dbReference type="GO" id="GO:0005737">
    <property type="term" value="C:cytoplasm"/>
    <property type="evidence" value="ECO:0007669"/>
    <property type="project" value="UniProtKB-UniRule"/>
</dbReference>
<dbReference type="GO" id="GO:0009295">
    <property type="term" value="C:nucleoid"/>
    <property type="evidence" value="ECO:0007669"/>
    <property type="project" value="UniProtKB-SubCell"/>
</dbReference>
<dbReference type="GO" id="GO:0051301">
    <property type="term" value="P:cell division"/>
    <property type="evidence" value="ECO:0007669"/>
    <property type="project" value="UniProtKB-KW"/>
</dbReference>
<dbReference type="GO" id="GO:0030261">
    <property type="term" value="P:chromosome condensation"/>
    <property type="evidence" value="ECO:0007669"/>
    <property type="project" value="UniProtKB-KW"/>
</dbReference>
<dbReference type="GO" id="GO:0007059">
    <property type="term" value="P:chromosome segregation"/>
    <property type="evidence" value="ECO:0007669"/>
    <property type="project" value="UniProtKB-UniRule"/>
</dbReference>
<dbReference type="GO" id="GO:0006260">
    <property type="term" value="P:DNA replication"/>
    <property type="evidence" value="ECO:0007669"/>
    <property type="project" value="UniProtKB-UniRule"/>
</dbReference>
<dbReference type="CDD" id="cd16336">
    <property type="entry name" value="MukE"/>
    <property type="match status" value="1"/>
</dbReference>
<dbReference type="Gene3D" id="1.10.10.2250">
    <property type="match status" value="1"/>
</dbReference>
<dbReference type="Gene3D" id="1.10.10.2260">
    <property type="entry name" value="MukE-like family, C-terminal domain"/>
    <property type="match status" value="1"/>
</dbReference>
<dbReference type="HAMAP" id="MF_01802">
    <property type="entry name" value="MukE"/>
    <property type="match status" value="1"/>
</dbReference>
<dbReference type="InterPro" id="IPR042037">
    <property type="entry name" value="MukE_C"/>
</dbReference>
<dbReference type="InterPro" id="IPR042038">
    <property type="entry name" value="MukE_N"/>
</dbReference>
<dbReference type="InterPro" id="IPR007385">
    <property type="entry name" value="Scp_MukE"/>
</dbReference>
<dbReference type="NCBIfam" id="NF003602">
    <property type="entry name" value="PRK05256.1"/>
    <property type="match status" value="1"/>
</dbReference>
<dbReference type="Pfam" id="PF04288">
    <property type="entry name" value="MukE"/>
    <property type="match status" value="1"/>
</dbReference>
<accession>Q7UD30</accession>
<accession>Q83RY6</accession>
<protein>
    <recommendedName>
        <fullName evidence="1">Chromosome partition protein MukE</fullName>
    </recommendedName>
</protein>
<organism>
    <name type="scientific">Shigella flexneri</name>
    <dbReference type="NCBI Taxonomy" id="623"/>
    <lineage>
        <taxon>Bacteria</taxon>
        <taxon>Pseudomonadati</taxon>
        <taxon>Pseudomonadota</taxon>
        <taxon>Gammaproteobacteria</taxon>
        <taxon>Enterobacterales</taxon>
        <taxon>Enterobacteriaceae</taxon>
        <taxon>Shigella</taxon>
    </lineage>
</organism>
<name>MUKE_SHIFL</name>
<proteinExistence type="evidence at protein level"/>
<reference key="1">
    <citation type="journal article" date="2002" name="Nucleic Acids Res.">
        <title>Genome sequence of Shigella flexneri 2a: insights into pathogenicity through comparison with genomes of Escherichia coli K12 and O157.</title>
        <authorList>
            <person name="Jin Q."/>
            <person name="Yuan Z."/>
            <person name="Xu J."/>
            <person name="Wang Y."/>
            <person name="Shen Y."/>
            <person name="Lu W."/>
            <person name="Wang J."/>
            <person name="Liu H."/>
            <person name="Yang J."/>
            <person name="Yang F."/>
            <person name="Zhang X."/>
            <person name="Zhang J."/>
            <person name="Yang G."/>
            <person name="Wu H."/>
            <person name="Qu D."/>
            <person name="Dong J."/>
            <person name="Sun L."/>
            <person name="Xue Y."/>
            <person name="Zhao A."/>
            <person name="Gao Y."/>
            <person name="Zhu J."/>
            <person name="Kan B."/>
            <person name="Ding K."/>
            <person name="Chen S."/>
            <person name="Cheng H."/>
            <person name="Yao Z."/>
            <person name="He B."/>
            <person name="Chen R."/>
            <person name="Ma D."/>
            <person name="Qiang B."/>
            <person name="Wen Y."/>
            <person name="Hou Y."/>
            <person name="Yu J."/>
        </authorList>
    </citation>
    <scope>NUCLEOTIDE SEQUENCE [LARGE SCALE GENOMIC DNA]</scope>
    <source>
        <strain>301 / Serotype 2a</strain>
    </source>
</reference>
<reference key="2">
    <citation type="journal article" date="2003" name="Infect. Immun.">
        <title>Complete genome sequence and comparative genomics of Shigella flexneri serotype 2a strain 2457T.</title>
        <authorList>
            <person name="Wei J."/>
            <person name="Goldberg M.B."/>
            <person name="Burland V."/>
            <person name="Venkatesan M.M."/>
            <person name="Deng W."/>
            <person name="Fournier G."/>
            <person name="Mayhew G.F."/>
            <person name="Plunkett G. III"/>
            <person name="Rose D.J."/>
            <person name="Darling A."/>
            <person name="Mau B."/>
            <person name="Perna N.T."/>
            <person name="Payne S.M."/>
            <person name="Runyen-Janecky L.J."/>
            <person name="Zhou S."/>
            <person name="Schwartz D.C."/>
            <person name="Blattner F.R."/>
        </authorList>
    </citation>
    <scope>NUCLEOTIDE SEQUENCE [LARGE SCALE GENOMIC DNA]</scope>
    <source>
        <strain>ATCC 700930 / 2457T / Serotype 2a</strain>
    </source>
</reference>
<evidence type="ECO:0000255" key="1">
    <source>
        <dbReference type="HAMAP-Rule" id="MF_01802"/>
    </source>
</evidence>
<evidence type="ECO:0000256" key="2">
    <source>
        <dbReference type="SAM" id="MobiDB-lite"/>
    </source>
</evidence>
<evidence type="ECO:0007829" key="3">
    <source>
        <dbReference type="PDB" id="7V8P"/>
    </source>
</evidence>
<gene>
    <name evidence="1" type="primary">mukE</name>
    <name type="ordered locus">SF0919</name>
    <name type="ordered locus">S0983</name>
</gene>
<sequence length="225" mass="25957">MPVKLAQALANPLFPALDSALRSGRHIGLDELDNHAFLMDFQEYLEEFYARYNVELIRAPEGFFYLRPRSTTLIPRSVLSELDMMVGKILCYLYLSPERLANEGIFTQQELYDELLTLADEAKLLKLVNNRSTGSDVDRQKLQEKVRSSLNRLRRLGMVWFMGHDSSKFRITESVFRFGADVRAGDDPREAQRRLIRDGEAMPIENHLQLNDETEESQPDSGEEE</sequence>
<feature type="chain" id="PRO_0000206803" description="Chromosome partition protein MukE">
    <location>
        <begin position="1"/>
        <end position="225"/>
    </location>
</feature>
<feature type="region of interest" description="Disordered" evidence="2">
    <location>
        <begin position="197"/>
        <end position="225"/>
    </location>
</feature>
<feature type="compositionally biased region" description="Acidic residues" evidence="2">
    <location>
        <begin position="212"/>
        <end position="225"/>
    </location>
</feature>
<feature type="helix" evidence="3">
    <location>
        <begin position="3"/>
        <end position="10"/>
    </location>
</feature>
<feature type="helix" evidence="3">
    <location>
        <begin position="14"/>
        <end position="22"/>
    </location>
</feature>
<feature type="helix" evidence="3">
    <location>
        <begin position="32"/>
        <end position="40"/>
    </location>
</feature>
<feature type="helix" evidence="3">
    <location>
        <begin position="42"/>
        <end position="50"/>
    </location>
</feature>
<feature type="turn" evidence="3">
    <location>
        <begin position="51"/>
        <end position="53"/>
    </location>
</feature>
<feature type="strand" evidence="3">
    <location>
        <begin position="54"/>
        <end position="58"/>
    </location>
</feature>
<feature type="strand" evidence="3">
    <location>
        <begin position="64"/>
        <end position="68"/>
    </location>
</feature>
<feature type="strand" evidence="3">
    <location>
        <begin position="76"/>
        <end position="78"/>
    </location>
</feature>
<feature type="helix" evidence="3">
    <location>
        <begin position="81"/>
        <end position="95"/>
    </location>
</feature>
<feature type="helix" evidence="3">
    <location>
        <begin position="99"/>
        <end position="102"/>
    </location>
</feature>
<feature type="strand" evidence="3">
    <location>
        <begin position="105"/>
        <end position="107"/>
    </location>
</feature>
<feature type="helix" evidence="3">
    <location>
        <begin position="108"/>
        <end position="118"/>
    </location>
</feature>
<feature type="helix" evidence="3">
    <location>
        <begin position="121"/>
        <end position="125"/>
    </location>
</feature>
<feature type="helix" evidence="3">
    <location>
        <begin position="139"/>
        <end position="155"/>
    </location>
</feature>
<feature type="strand" evidence="3">
    <location>
        <begin position="158"/>
        <end position="165"/>
    </location>
</feature>
<feature type="strand" evidence="3">
    <location>
        <begin position="168"/>
        <end position="171"/>
    </location>
</feature>
<feature type="helix" evidence="3">
    <location>
        <begin position="173"/>
        <end position="178"/>
    </location>
</feature>
<feature type="helix" evidence="3">
    <location>
        <begin position="188"/>
        <end position="195"/>
    </location>
</feature>
<feature type="strand" evidence="3">
    <location>
        <begin position="216"/>
        <end position="218"/>
    </location>
</feature>
<comment type="function">
    <text evidence="1">Involved in chromosome condensation, segregation and cell cycle progression. May participate in facilitating chromosome segregation by condensation DNA from both sides of a centrally located replisome during cell division. Probably acts via its interaction with MukB and MukF.</text>
</comment>
<comment type="subunit">
    <text evidence="1">Interacts, and probably forms a ternary complex, with MukF and MukB. The complex formation is stimulated by calcium or magnesium.</text>
</comment>
<comment type="subcellular location">
    <subcellularLocation>
        <location evidence="1">Cytoplasm</location>
        <location evidence="1">Nucleoid</location>
    </subcellularLocation>
    <text evidence="1">Restricted to the nucleoid region.</text>
</comment>
<comment type="similarity">
    <text evidence="1">Belongs to the MukE family.</text>
</comment>
<keyword id="KW-0002">3D-structure</keyword>
<keyword id="KW-0131">Cell cycle</keyword>
<keyword id="KW-0132">Cell division</keyword>
<keyword id="KW-0159">Chromosome partition</keyword>
<keyword id="KW-0963">Cytoplasm</keyword>
<keyword id="KW-0226">DNA condensation</keyword>
<keyword id="KW-1185">Reference proteome</keyword>